<comment type="function">
    <text evidence="2">GTP hydrolase that promotes the GTP-dependent binding of aminoacyl-tRNA to the A-site of ribosomes during protein biosynthesis.</text>
</comment>
<comment type="catalytic activity">
    <reaction evidence="2">
        <text>GTP + H2O = GDP + phosphate + H(+)</text>
        <dbReference type="Rhea" id="RHEA:19669"/>
        <dbReference type="ChEBI" id="CHEBI:15377"/>
        <dbReference type="ChEBI" id="CHEBI:15378"/>
        <dbReference type="ChEBI" id="CHEBI:37565"/>
        <dbReference type="ChEBI" id="CHEBI:43474"/>
        <dbReference type="ChEBI" id="CHEBI:58189"/>
        <dbReference type="EC" id="3.6.5.3"/>
    </reaction>
    <physiologicalReaction direction="left-to-right" evidence="2">
        <dbReference type="Rhea" id="RHEA:19670"/>
    </physiologicalReaction>
</comment>
<comment type="subunit">
    <text evidence="2">Monomer.</text>
</comment>
<comment type="subcellular location">
    <subcellularLocation>
        <location evidence="2">Cytoplasm</location>
    </subcellularLocation>
</comment>
<comment type="similarity">
    <text evidence="2">Belongs to the TRAFAC class translation factor GTPase superfamily. Classic translation factor GTPase family. EF-Tu/EF-1A subfamily.</text>
</comment>
<feature type="chain" id="PRO_0000337409" description="Elongation factor Tu">
    <location>
        <begin position="1"/>
        <end position="391"/>
    </location>
</feature>
<feature type="domain" description="tr-type G">
    <location>
        <begin position="10"/>
        <end position="201"/>
    </location>
</feature>
<feature type="region of interest" description="G1" evidence="1">
    <location>
        <begin position="19"/>
        <end position="26"/>
    </location>
</feature>
<feature type="region of interest" description="G2" evidence="1">
    <location>
        <begin position="55"/>
        <end position="59"/>
    </location>
</feature>
<feature type="region of interest" description="G3" evidence="1">
    <location>
        <begin position="76"/>
        <end position="79"/>
    </location>
</feature>
<feature type="region of interest" description="G4" evidence="1">
    <location>
        <begin position="131"/>
        <end position="134"/>
    </location>
</feature>
<feature type="region of interest" description="G5" evidence="1">
    <location>
        <begin position="169"/>
        <end position="171"/>
    </location>
</feature>
<feature type="binding site" evidence="2">
    <location>
        <begin position="19"/>
        <end position="26"/>
    </location>
    <ligand>
        <name>GTP</name>
        <dbReference type="ChEBI" id="CHEBI:37565"/>
    </ligand>
</feature>
<feature type="binding site" evidence="2">
    <location>
        <position position="26"/>
    </location>
    <ligand>
        <name>Mg(2+)</name>
        <dbReference type="ChEBI" id="CHEBI:18420"/>
    </ligand>
</feature>
<feature type="binding site" evidence="2">
    <location>
        <begin position="76"/>
        <end position="80"/>
    </location>
    <ligand>
        <name>GTP</name>
        <dbReference type="ChEBI" id="CHEBI:37565"/>
    </ligand>
</feature>
<feature type="binding site" evidence="2">
    <location>
        <begin position="131"/>
        <end position="134"/>
    </location>
    <ligand>
        <name>GTP</name>
        <dbReference type="ChEBI" id="CHEBI:37565"/>
    </ligand>
</feature>
<organism>
    <name type="scientific">Jannaschia sp. (strain CCS1)</name>
    <dbReference type="NCBI Taxonomy" id="290400"/>
    <lineage>
        <taxon>Bacteria</taxon>
        <taxon>Pseudomonadati</taxon>
        <taxon>Pseudomonadota</taxon>
        <taxon>Alphaproteobacteria</taxon>
        <taxon>Rhodobacterales</taxon>
        <taxon>Roseobacteraceae</taxon>
        <taxon>Jannaschia</taxon>
    </lineage>
</organism>
<reference key="1">
    <citation type="submission" date="2006-02" db="EMBL/GenBank/DDBJ databases">
        <title>Complete sequence of chromosome of Jannaschia sp. CCS1.</title>
        <authorList>
            <consortium name="US DOE Joint Genome Institute"/>
            <person name="Copeland A."/>
            <person name="Lucas S."/>
            <person name="Lapidus A."/>
            <person name="Barry K."/>
            <person name="Detter J.C."/>
            <person name="Glavina del Rio T."/>
            <person name="Hammon N."/>
            <person name="Israni S."/>
            <person name="Pitluck S."/>
            <person name="Brettin T."/>
            <person name="Bruce D."/>
            <person name="Han C."/>
            <person name="Tapia R."/>
            <person name="Gilna P."/>
            <person name="Chertkov O."/>
            <person name="Saunders E."/>
            <person name="Schmutz J."/>
            <person name="Larimer F."/>
            <person name="Land M."/>
            <person name="Kyrpides N."/>
            <person name="Lykidis A."/>
            <person name="Moran M.A."/>
            <person name="Belas R."/>
            <person name="Ye W."/>
            <person name="Buchan A."/>
            <person name="Gonzalez J.M."/>
            <person name="Schell M.A."/>
            <person name="Richardson P."/>
        </authorList>
    </citation>
    <scope>NUCLEOTIDE SEQUENCE [LARGE SCALE GENOMIC DNA]</scope>
    <source>
        <strain>CCS1</strain>
    </source>
</reference>
<gene>
    <name evidence="2" type="primary">tuf1</name>
    <name type="ordered locus">Jann_0555</name>
</gene>
<gene>
    <name evidence="2" type="primary">tuf2</name>
    <name type="ordered locus">Jann_0578</name>
</gene>
<accession>Q28UW7</accession>
<dbReference type="EC" id="3.6.5.3" evidence="2"/>
<dbReference type="EMBL" id="CP000264">
    <property type="protein sequence ID" value="ABD53472.1"/>
    <property type="molecule type" value="Genomic_DNA"/>
</dbReference>
<dbReference type="EMBL" id="CP000264">
    <property type="protein sequence ID" value="ABD53495.1"/>
    <property type="molecule type" value="Genomic_DNA"/>
</dbReference>
<dbReference type="RefSeq" id="WP_011453681.1">
    <property type="nucleotide sequence ID" value="NC_007802.1"/>
</dbReference>
<dbReference type="SMR" id="Q28UW7"/>
<dbReference type="STRING" id="290400.Jann_0555"/>
<dbReference type="KEGG" id="jan:Jann_0555"/>
<dbReference type="KEGG" id="jan:Jann_0578"/>
<dbReference type="eggNOG" id="COG0050">
    <property type="taxonomic scope" value="Bacteria"/>
</dbReference>
<dbReference type="HOGENOM" id="CLU_007265_0_1_5"/>
<dbReference type="OrthoDB" id="9803139at2"/>
<dbReference type="Proteomes" id="UP000008326">
    <property type="component" value="Chromosome"/>
</dbReference>
<dbReference type="GO" id="GO:0005737">
    <property type="term" value="C:cytoplasm"/>
    <property type="evidence" value="ECO:0007669"/>
    <property type="project" value="UniProtKB-SubCell"/>
</dbReference>
<dbReference type="GO" id="GO:0005525">
    <property type="term" value="F:GTP binding"/>
    <property type="evidence" value="ECO:0007669"/>
    <property type="project" value="UniProtKB-UniRule"/>
</dbReference>
<dbReference type="GO" id="GO:0003924">
    <property type="term" value="F:GTPase activity"/>
    <property type="evidence" value="ECO:0007669"/>
    <property type="project" value="InterPro"/>
</dbReference>
<dbReference type="GO" id="GO:0097216">
    <property type="term" value="F:guanosine tetraphosphate binding"/>
    <property type="evidence" value="ECO:0007669"/>
    <property type="project" value="UniProtKB-ARBA"/>
</dbReference>
<dbReference type="GO" id="GO:0003746">
    <property type="term" value="F:translation elongation factor activity"/>
    <property type="evidence" value="ECO:0007669"/>
    <property type="project" value="UniProtKB-UniRule"/>
</dbReference>
<dbReference type="CDD" id="cd01884">
    <property type="entry name" value="EF_Tu"/>
    <property type="match status" value="1"/>
</dbReference>
<dbReference type="CDD" id="cd03697">
    <property type="entry name" value="EFTU_II"/>
    <property type="match status" value="1"/>
</dbReference>
<dbReference type="CDD" id="cd03707">
    <property type="entry name" value="EFTU_III"/>
    <property type="match status" value="1"/>
</dbReference>
<dbReference type="FunFam" id="2.40.30.10:FF:000001">
    <property type="entry name" value="Elongation factor Tu"/>
    <property type="match status" value="1"/>
</dbReference>
<dbReference type="FunFam" id="3.40.50.300:FF:000003">
    <property type="entry name" value="Elongation factor Tu"/>
    <property type="match status" value="1"/>
</dbReference>
<dbReference type="Gene3D" id="3.40.50.300">
    <property type="entry name" value="P-loop containing nucleotide triphosphate hydrolases"/>
    <property type="match status" value="1"/>
</dbReference>
<dbReference type="Gene3D" id="2.40.30.10">
    <property type="entry name" value="Translation factors"/>
    <property type="match status" value="2"/>
</dbReference>
<dbReference type="HAMAP" id="MF_00118_B">
    <property type="entry name" value="EF_Tu_B"/>
    <property type="match status" value="1"/>
</dbReference>
<dbReference type="InterPro" id="IPR041709">
    <property type="entry name" value="EF-Tu_GTP-bd"/>
</dbReference>
<dbReference type="InterPro" id="IPR050055">
    <property type="entry name" value="EF-Tu_GTPase"/>
</dbReference>
<dbReference type="InterPro" id="IPR004161">
    <property type="entry name" value="EFTu-like_2"/>
</dbReference>
<dbReference type="InterPro" id="IPR033720">
    <property type="entry name" value="EFTU_2"/>
</dbReference>
<dbReference type="InterPro" id="IPR031157">
    <property type="entry name" value="G_TR_CS"/>
</dbReference>
<dbReference type="InterPro" id="IPR027417">
    <property type="entry name" value="P-loop_NTPase"/>
</dbReference>
<dbReference type="InterPro" id="IPR005225">
    <property type="entry name" value="Small_GTP-bd"/>
</dbReference>
<dbReference type="InterPro" id="IPR000795">
    <property type="entry name" value="T_Tr_GTP-bd_dom"/>
</dbReference>
<dbReference type="InterPro" id="IPR009000">
    <property type="entry name" value="Transl_B-barrel_sf"/>
</dbReference>
<dbReference type="InterPro" id="IPR009001">
    <property type="entry name" value="Transl_elong_EF1A/Init_IF2_C"/>
</dbReference>
<dbReference type="InterPro" id="IPR004541">
    <property type="entry name" value="Transl_elong_EFTu/EF1A_bac/org"/>
</dbReference>
<dbReference type="InterPro" id="IPR004160">
    <property type="entry name" value="Transl_elong_EFTu/EF1A_C"/>
</dbReference>
<dbReference type="NCBIfam" id="TIGR00485">
    <property type="entry name" value="EF-Tu"/>
    <property type="match status" value="1"/>
</dbReference>
<dbReference type="NCBIfam" id="NF000766">
    <property type="entry name" value="PRK00049.1"/>
    <property type="match status" value="1"/>
</dbReference>
<dbReference type="NCBIfam" id="NF009372">
    <property type="entry name" value="PRK12735.1"/>
    <property type="match status" value="1"/>
</dbReference>
<dbReference type="NCBIfam" id="NF009373">
    <property type="entry name" value="PRK12736.1"/>
    <property type="match status" value="1"/>
</dbReference>
<dbReference type="NCBIfam" id="TIGR00231">
    <property type="entry name" value="small_GTP"/>
    <property type="match status" value="1"/>
</dbReference>
<dbReference type="PANTHER" id="PTHR43721:SF22">
    <property type="entry name" value="ELONGATION FACTOR TU, MITOCHONDRIAL"/>
    <property type="match status" value="1"/>
</dbReference>
<dbReference type="PANTHER" id="PTHR43721">
    <property type="entry name" value="ELONGATION FACTOR TU-RELATED"/>
    <property type="match status" value="1"/>
</dbReference>
<dbReference type="Pfam" id="PF00009">
    <property type="entry name" value="GTP_EFTU"/>
    <property type="match status" value="1"/>
</dbReference>
<dbReference type="Pfam" id="PF03144">
    <property type="entry name" value="GTP_EFTU_D2"/>
    <property type="match status" value="1"/>
</dbReference>
<dbReference type="Pfam" id="PF03143">
    <property type="entry name" value="GTP_EFTU_D3"/>
    <property type="match status" value="1"/>
</dbReference>
<dbReference type="PRINTS" id="PR00315">
    <property type="entry name" value="ELONGATNFCT"/>
</dbReference>
<dbReference type="SUPFAM" id="SSF50465">
    <property type="entry name" value="EF-Tu/eEF-1alpha/eIF2-gamma C-terminal domain"/>
    <property type="match status" value="1"/>
</dbReference>
<dbReference type="SUPFAM" id="SSF52540">
    <property type="entry name" value="P-loop containing nucleoside triphosphate hydrolases"/>
    <property type="match status" value="1"/>
</dbReference>
<dbReference type="SUPFAM" id="SSF50447">
    <property type="entry name" value="Translation proteins"/>
    <property type="match status" value="1"/>
</dbReference>
<dbReference type="PROSITE" id="PS00301">
    <property type="entry name" value="G_TR_1"/>
    <property type="match status" value="1"/>
</dbReference>
<dbReference type="PROSITE" id="PS51722">
    <property type="entry name" value="G_TR_2"/>
    <property type="match status" value="1"/>
</dbReference>
<sequence>MAKEKFERSKPHVNIGTIGHVDHGKTTLTAAITKQFGDFQDYASIDSAPEERARGITISTAHVEYETENRHYAHVDCPGHADYVKNMITGAAQMDGAILVVNAADGPMPQTREHILLGRQVGIPYMVVYMNKVDQVDDEELLELVEMEIRELLSSYEYPGDDIPVIPGSALAALEGRDDAIGKDSIDKLMAAVDEYIPTPARAVDQPFLMPIEDVFSISGRGTVVTGRVERGVINVGDEISIVGIRDTTKTTCTGVEMFRKLLDRGEAGDNIGALLRGVDREGVERGQVLCKPGSVDPHTKFEAEAYILTKEEGGRHTPFFANYRPQFYFRTTDVTGTVNLPAGTEMVMPGDNLKFEVELIAPIAMEDGLRFAIREGGRTVGAGVVAKIIE</sequence>
<evidence type="ECO:0000250" key="1"/>
<evidence type="ECO:0000255" key="2">
    <source>
        <dbReference type="HAMAP-Rule" id="MF_00118"/>
    </source>
</evidence>
<protein>
    <recommendedName>
        <fullName evidence="2">Elongation factor Tu</fullName>
        <shortName evidence="2">EF-Tu</shortName>
        <ecNumber evidence="2">3.6.5.3</ecNumber>
    </recommendedName>
</protein>
<name>EFTU_JANSC</name>
<proteinExistence type="inferred from homology"/>
<keyword id="KW-0963">Cytoplasm</keyword>
<keyword id="KW-0251">Elongation factor</keyword>
<keyword id="KW-0342">GTP-binding</keyword>
<keyword id="KW-0378">Hydrolase</keyword>
<keyword id="KW-0460">Magnesium</keyword>
<keyword id="KW-0479">Metal-binding</keyword>
<keyword id="KW-0547">Nucleotide-binding</keyword>
<keyword id="KW-0648">Protein biosynthesis</keyword>
<keyword id="KW-1185">Reference proteome</keyword>